<organism>
    <name type="scientific">Bat coronavirus 512/2005</name>
    <name type="common">BtCoV</name>
    <name type="synonym">BtCoV/512/2005</name>
    <dbReference type="NCBI Taxonomy" id="693999"/>
    <lineage>
        <taxon>Viruses</taxon>
        <taxon>Riboviria</taxon>
        <taxon>Orthornavirae</taxon>
        <taxon>Pisuviricota</taxon>
        <taxon>Pisoniviricetes</taxon>
        <taxon>Nidovirales</taxon>
        <taxon>Cornidovirineae</taxon>
        <taxon>Coronaviridae</taxon>
        <taxon>Orthocoronavirinae</taxon>
        <taxon>Alphacoronavirus</taxon>
        <taxon>Pedacovirus</taxon>
        <taxon>Alphacoronavirus scotophili</taxon>
    </lineage>
</organism>
<comment type="function">
    <text evidence="1 2">Component of the viral envelope that plays a central role in virus morphogenesis and assembly via its interactions with other viral proteins.</text>
</comment>
<comment type="subunit">
    <text evidence="1 2">Homomultimer. Interacts with envelope E protein in the budding compartment of the host cell, which is located between endoplasmic reticulum and the Golgi complex. Forms a complex with HE and S proteins. Interacts with nucleocapsid N protein. This interaction probably participates in RNA packaging into the virus.</text>
</comment>
<comment type="subcellular location">
    <subcellularLocation>
        <location evidence="1">Virion membrane</location>
        <topology evidence="1">Multi-pass membrane protein</topology>
    </subcellularLocation>
    <subcellularLocation>
        <location evidence="1">Host Golgi apparatus membrane</location>
        <topology evidence="1">Multi-pass membrane protein</topology>
    </subcellularLocation>
    <text evidence="1">Largely embedded in the lipid bilayer.</text>
</comment>
<comment type="miscellaneous">
    <text>Bat coronavirus 512/2005 is highly similar to porcine epidemic diarrhea virus (PEDV).</text>
</comment>
<comment type="similarity">
    <text evidence="1">Belongs to the alphacoronaviruses M protein family.</text>
</comment>
<organismHost>
    <name type="scientific">Scotophilus kuhlii</name>
    <name type="common">Lesser asiatic yellow bat</name>
    <dbReference type="NCBI Taxonomy" id="153297"/>
</organismHost>
<keyword id="KW-0325">Glycoprotein</keyword>
<keyword id="KW-1040">Host Golgi apparatus</keyword>
<keyword id="KW-1043">Host membrane</keyword>
<keyword id="KW-0472">Membrane</keyword>
<keyword id="KW-0812">Transmembrane</keyword>
<keyword id="KW-1133">Transmembrane helix</keyword>
<keyword id="KW-0261">Viral envelope protein</keyword>
<keyword id="KW-0468">Viral matrix protein</keyword>
<keyword id="KW-0946">Virion</keyword>
<feature type="chain" id="PRO_0000289935" description="Membrane protein">
    <location>
        <begin position="1"/>
        <end position="227"/>
    </location>
</feature>
<feature type="topological domain" description="Virion surface" evidence="1">
    <location>
        <begin position="1"/>
        <end position="12"/>
    </location>
</feature>
<feature type="transmembrane region" description="Helical" evidence="1">
    <location>
        <begin position="13"/>
        <end position="33"/>
    </location>
</feature>
<feature type="topological domain" description="Intravirion" evidence="1">
    <location>
        <begin position="34"/>
        <end position="42"/>
    </location>
</feature>
<feature type="transmembrane region" description="Helical" evidence="1">
    <location>
        <begin position="43"/>
        <end position="63"/>
    </location>
</feature>
<feature type="topological domain" description="Virion surface" evidence="1">
    <location>
        <begin position="64"/>
        <end position="76"/>
    </location>
</feature>
<feature type="transmembrane region" description="Helical" evidence="1">
    <location>
        <begin position="77"/>
        <end position="97"/>
    </location>
</feature>
<feature type="topological domain" description="Intravirion" evidence="1">
    <location>
        <begin position="98"/>
        <end position="227"/>
    </location>
</feature>
<feature type="region of interest" description="Interaction with N protein" evidence="1">
    <location>
        <begin position="201"/>
        <end position="217"/>
    </location>
</feature>
<sequence length="227" mass="25666">MSSNQSVPVEEVIKHLRNWNFSWNIILTILLVVLQYGHYKYSRVLYGLKMAILWLLWPLVLALSIFDAWASFNVNWVFFAFSILMACVTAVLWIMYFVNSIRLWRRTHSWWSYNPETDSILSVSVLGRHVCLPILGAPTGVTLTLLNGTLLVEGYQVATGVQVNNLPGYVTVAKASTTIVYQRVGRSMNANSSTGWAFFVKSKHGDYYAAANPTEVVTDSEKILHLV</sequence>
<accession>Q0Q463</accession>
<protein>
    <recommendedName>
        <fullName evidence="1">Membrane protein</fullName>
        <shortName evidence="1">M protein</shortName>
    </recommendedName>
    <alternativeName>
        <fullName evidence="1">E1 glycoprotein</fullName>
    </alternativeName>
    <alternativeName>
        <fullName evidence="1">Matrix glycoprotein</fullName>
    </alternativeName>
    <alternativeName>
        <fullName evidence="1">Membrane glycoprotein</fullName>
    </alternativeName>
</protein>
<gene>
    <name evidence="1" type="primary">M</name>
    <name type="ORF">5</name>
</gene>
<proteinExistence type="inferred from homology"/>
<evidence type="ECO:0000255" key="1">
    <source>
        <dbReference type="HAMAP-Rule" id="MF_04201"/>
    </source>
</evidence>
<evidence type="ECO:0000255" key="2">
    <source>
        <dbReference type="PROSITE-ProRule" id="PRU01275"/>
    </source>
</evidence>
<dbReference type="EMBL" id="DQ648858">
    <property type="protein sequence ID" value="ABG47081.1"/>
    <property type="molecule type" value="Genomic_RNA"/>
</dbReference>
<dbReference type="RefSeq" id="YP_001351687.1">
    <property type="nucleotide sequence ID" value="NC_009657.1"/>
</dbReference>
<dbReference type="SMR" id="Q0Q463"/>
<dbReference type="KEGG" id="vg:11266521"/>
<dbReference type="OrthoDB" id="8130at10239"/>
<dbReference type="Proteomes" id="UP000113079">
    <property type="component" value="Genome"/>
</dbReference>
<dbReference type="GO" id="GO:0044178">
    <property type="term" value="C:host cell Golgi membrane"/>
    <property type="evidence" value="ECO:0007669"/>
    <property type="project" value="UniProtKB-SubCell"/>
</dbReference>
<dbReference type="GO" id="GO:0016020">
    <property type="term" value="C:membrane"/>
    <property type="evidence" value="ECO:0007669"/>
    <property type="project" value="UniProtKB-UniRule"/>
</dbReference>
<dbReference type="GO" id="GO:0019031">
    <property type="term" value="C:viral envelope"/>
    <property type="evidence" value="ECO:0007669"/>
    <property type="project" value="UniProtKB-UniRule"/>
</dbReference>
<dbReference type="GO" id="GO:0055036">
    <property type="term" value="C:virion membrane"/>
    <property type="evidence" value="ECO:0007669"/>
    <property type="project" value="UniProtKB-SubCell"/>
</dbReference>
<dbReference type="GO" id="GO:0039660">
    <property type="term" value="F:structural constituent of virion"/>
    <property type="evidence" value="ECO:0007669"/>
    <property type="project" value="UniProtKB-UniRule"/>
</dbReference>
<dbReference type="CDD" id="cd21564">
    <property type="entry name" value="alphaCoV_M"/>
    <property type="match status" value="1"/>
</dbReference>
<dbReference type="HAMAP" id="MF_04201">
    <property type="entry name" value="ALPHA_CORONA_M"/>
    <property type="match status" value="1"/>
</dbReference>
<dbReference type="InterPro" id="IPR042551">
    <property type="entry name" value="ALPHA_CORONA_M"/>
</dbReference>
<dbReference type="InterPro" id="IPR002574">
    <property type="entry name" value="M_CoV"/>
</dbReference>
<dbReference type="Pfam" id="PF01635">
    <property type="entry name" value="CoV_M"/>
    <property type="match status" value="1"/>
</dbReference>
<dbReference type="PROSITE" id="PS51927">
    <property type="entry name" value="COV_M"/>
    <property type="match status" value="1"/>
</dbReference>
<reference key="1">
    <citation type="journal article" date="2006" name="J. Virol.">
        <title>Prevalence and genetic diversity of coronaviruses in bats from China.</title>
        <authorList>
            <person name="Tang X.C."/>
            <person name="Zhang J.X."/>
            <person name="Zhang S.Y."/>
            <person name="Wang P."/>
            <person name="Fan X.H."/>
            <person name="Li L.F."/>
            <person name="Li G."/>
            <person name="Dong B.Q."/>
            <person name="Liu W."/>
            <person name="Cheung C.L."/>
            <person name="Xu K.M."/>
            <person name="Song W.J."/>
            <person name="Vijaykrishna D."/>
            <person name="Poon L.L.M."/>
            <person name="Peiris J.S.M."/>
            <person name="Smith G.J."/>
            <person name="Chen H."/>
            <person name="Guan Y."/>
        </authorList>
    </citation>
    <scope>NUCLEOTIDE SEQUENCE [GENOMIC RNA]</scope>
</reference>
<name>VME1_BC512</name>